<proteinExistence type="evidence at protein level"/>
<dbReference type="EMBL" id="AJ306731">
    <property type="protein sequence ID" value="CAC37948.1"/>
    <property type="molecule type" value="mRNA"/>
</dbReference>
<dbReference type="EMBL" id="AJ306732">
    <property type="protein sequence ID" value="CAC37949.1"/>
    <property type="molecule type" value="mRNA"/>
</dbReference>
<dbReference type="EMBL" id="AK001170">
    <property type="status" value="NOT_ANNOTATED_CDS"/>
    <property type="molecule type" value="mRNA"/>
</dbReference>
<dbReference type="EMBL" id="AK023281">
    <property type="protein sequence ID" value="BAB14506.1"/>
    <property type="molecule type" value="mRNA"/>
</dbReference>
<dbReference type="EMBL" id="AK027567">
    <property type="protein sequence ID" value="BAB55203.1"/>
    <property type="molecule type" value="mRNA"/>
</dbReference>
<dbReference type="EMBL" id="AK125358">
    <property type="protein sequence ID" value="BAC86144.1"/>
    <property type="molecule type" value="mRNA"/>
</dbReference>
<dbReference type="EMBL" id="AK291691">
    <property type="protein sequence ID" value="BAF84380.1"/>
    <property type="molecule type" value="mRNA"/>
</dbReference>
<dbReference type="EMBL" id="AL833975">
    <property type="protein sequence ID" value="CAD38819.1"/>
    <property type="molecule type" value="mRNA"/>
</dbReference>
<dbReference type="EMBL" id="BC001241">
    <property type="protein sequence ID" value="AAH01241.1"/>
    <property type="status" value="ALT_INIT"/>
    <property type="molecule type" value="mRNA"/>
</dbReference>
<dbReference type="EMBL" id="BC080195">
    <property type="protein sequence ID" value="AAH80195.1"/>
    <property type="molecule type" value="mRNA"/>
</dbReference>
<dbReference type="EMBL" id="AF163257">
    <property type="protein sequence ID" value="AAQ13586.1"/>
    <property type="status" value="ALT_INIT"/>
    <property type="molecule type" value="mRNA"/>
</dbReference>
<dbReference type="EMBL" id="AF173885">
    <property type="protein sequence ID" value="AAQ13632.1"/>
    <property type="status" value="ALT_INIT"/>
    <property type="molecule type" value="mRNA"/>
</dbReference>
<dbReference type="CCDS" id="CCDS32408.1">
    <molecule id="Q68EM7-2"/>
</dbReference>
<dbReference type="CCDS" id="CCDS32409.1">
    <molecule id="Q68EM7-1"/>
</dbReference>
<dbReference type="PIR" id="F59433">
    <property type="entry name" value="F59433"/>
</dbReference>
<dbReference type="RefSeq" id="NP_001006635.1">
    <molecule id="Q68EM7-1"/>
    <property type="nucleotide sequence ID" value="NM_001006634.3"/>
</dbReference>
<dbReference type="RefSeq" id="NP_060524.4">
    <molecule id="Q68EM7-2"/>
    <property type="nucleotide sequence ID" value="NM_018054.5"/>
</dbReference>
<dbReference type="RefSeq" id="XP_047290270.1">
    <molecule id="Q68EM7-6"/>
    <property type="nucleotide sequence ID" value="XM_047434314.1"/>
</dbReference>
<dbReference type="RefSeq" id="XP_047290276.1">
    <molecule id="Q68EM7-3"/>
    <property type="nucleotide sequence ID" value="XM_047434320.1"/>
</dbReference>
<dbReference type="RefSeq" id="XP_054188612.1">
    <molecule id="Q68EM7-6"/>
    <property type="nucleotide sequence ID" value="XM_054332637.1"/>
</dbReference>
<dbReference type="RefSeq" id="XP_054188619.1">
    <molecule id="Q68EM7-3"/>
    <property type="nucleotide sequence ID" value="XM_054332644.1"/>
</dbReference>
<dbReference type="RefSeq" id="XP_054236607.1">
    <molecule id="Q68EM7-6"/>
    <property type="nucleotide sequence ID" value="XM_054380632.1"/>
</dbReference>
<dbReference type="RefSeq" id="XP_054236614.1">
    <molecule id="Q68EM7-3"/>
    <property type="nucleotide sequence ID" value="XM_054380639.1"/>
</dbReference>
<dbReference type="SMR" id="Q68EM7"/>
<dbReference type="BioGRID" id="120424">
    <property type="interactions" value="102"/>
</dbReference>
<dbReference type="CORUM" id="Q68EM7"/>
<dbReference type="FunCoup" id="Q68EM7">
    <property type="interactions" value="2564"/>
</dbReference>
<dbReference type="IntAct" id="Q68EM7">
    <property type="interactions" value="35"/>
</dbReference>
<dbReference type="MINT" id="Q68EM7"/>
<dbReference type="STRING" id="9606.ENSP00000289968"/>
<dbReference type="GlyGen" id="Q68EM7">
    <property type="glycosylation" value="3 sites, 1 O-linked glycan (1 site)"/>
</dbReference>
<dbReference type="iPTMnet" id="Q68EM7"/>
<dbReference type="MetOSite" id="Q68EM7"/>
<dbReference type="PhosphoSitePlus" id="Q68EM7"/>
<dbReference type="SwissPalm" id="Q68EM7"/>
<dbReference type="BioMuta" id="ARHGAP17"/>
<dbReference type="DMDM" id="74736331"/>
<dbReference type="jPOST" id="Q68EM7"/>
<dbReference type="MassIVE" id="Q68EM7"/>
<dbReference type="PaxDb" id="9606-ENSP00000289968"/>
<dbReference type="PeptideAtlas" id="Q68EM7"/>
<dbReference type="ProteomicsDB" id="66129">
    <molecule id="Q68EM7-1"/>
</dbReference>
<dbReference type="ProteomicsDB" id="66130">
    <molecule id="Q68EM7-2"/>
</dbReference>
<dbReference type="ProteomicsDB" id="66131">
    <molecule id="Q68EM7-3"/>
</dbReference>
<dbReference type="ProteomicsDB" id="66132">
    <molecule id="Q68EM7-4"/>
</dbReference>
<dbReference type="ProteomicsDB" id="66133">
    <molecule id="Q68EM7-5"/>
</dbReference>
<dbReference type="ProteomicsDB" id="66134">
    <molecule id="Q68EM7-6"/>
</dbReference>
<dbReference type="ProteomicsDB" id="66135">
    <molecule id="Q68EM7-7"/>
</dbReference>
<dbReference type="Pumba" id="Q68EM7"/>
<dbReference type="Antibodypedia" id="52174">
    <property type="antibodies" value="174 antibodies from 27 providers"/>
</dbReference>
<dbReference type="DNASU" id="55114"/>
<dbReference type="Ensembl" id="ENST00000289968.11">
    <molecule id="Q68EM7-1"/>
    <property type="protein sequence ID" value="ENSP00000289968.6"/>
    <property type="gene ID" value="ENSG00000140750.17"/>
</dbReference>
<dbReference type="Ensembl" id="ENST00000303665.9">
    <molecule id="Q68EM7-2"/>
    <property type="protein sequence ID" value="ENSP00000303130.5"/>
    <property type="gene ID" value="ENSG00000140750.17"/>
</dbReference>
<dbReference type="Ensembl" id="ENST00000673196.1">
    <molecule id="Q68EM7-2"/>
    <property type="protein sequence ID" value="ENSP00000500849.1"/>
    <property type="gene ID" value="ENSG00000288353.1"/>
</dbReference>
<dbReference type="Ensembl" id="ENST00000673560.1">
    <molecule id="Q68EM7-1"/>
    <property type="protein sequence ID" value="ENSP00000500372.1"/>
    <property type="gene ID" value="ENSG00000288353.1"/>
</dbReference>
<dbReference type="GeneID" id="55114"/>
<dbReference type="KEGG" id="hsa:55114"/>
<dbReference type="MANE-Select" id="ENST00000289968.11">
    <property type="protein sequence ID" value="ENSP00000289968.6"/>
    <property type="RefSeq nucleotide sequence ID" value="NM_001006634.3"/>
    <property type="RefSeq protein sequence ID" value="NP_001006635.1"/>
</dbReference>
<dbReference type="UCSC" id="uc002dnb.5">
    <molecule id="Q68EM7-1"/>
    <property type="organism name" value="human"/>
</dbReference>
<dbReference type="AGR" id="HGNC:18239"/>
<dbReference type="CTD" id="55114"/>
<dbReference type="DisGeNET" id="55114"/>
<dbReference type="GeneCards" id="ARHGAP17"/>
<dbReference type="HGNC" id="HGNC:18239">
    <property type="gene designation" value="ARHGAP17"/>
</dbReference>
<dbReference type="HPA" id="ENSG00000140750">
    <property type="expression patterns" value="Low tissue specificity"/>
</dbReference>
<dbReference type="MIM" id="608293">
    <property type="type" value="gene"/>
</dbReference>
<dbReference type="neXtProt" id="NX_Q68EM7"/>
<dbReference type="OpenTargets" id="ENSG00000140750"/>
<dbReference type="PharmGKB" id="PA134908575"/>
<dbReference type="VEuPathDB" id="HostDB:ENSG00000140750"/>
<dbReference type="eggNOG" id="KOG4270">
    <property type="taxonomic scope" value="Eukaryota"/>
</dbReference>
<dbReference type="GeneTree" id="ENSGT00940000156201"/>
<dbReference type="HOGENOM" id="CLU_013806_0_0_1"/>
<dbReference type="InParanoid" id="Q68EM7"/>
<dbReference type="OMA" id="REHRRSW"/>
<dbReference type="OrthoDB" id="19923at2759"/>
<dbReference type="PAN-GO" id="Q68EM7">
    <property type="GO annotations" value="5 GO annotations based on evolutionary models"/>
</dbReference>
<dbReference type="PhylomeDB" id="Q68EM7"/>
<dbReference type="TreeFam" id="TF350627"/>
<dbReference type="PathwayCommons" id="Q68EM7"/>
<dbReference type="Reactome" id="R-HSA-9013148">
    <property type="pathway name" value="CDC42 GTPase cycle"/>
</dbReference>
<dbReference type="Reactome" id="R-HSA-9013149">
    <property type="pathway name" value="RAC1 GTPase cycle"/>
</dbReference>
<dbReference type="Reactome" id="R-HSA-9013404">
    <property type="pathway name" value="RAC2 GTPase cycle"/>
</dbReference>
<dbReference type="Reactome" id="R-HSA-9013405">
    <property type="pathway name" value="RHOD GTPase cycle"/>
</dbReference>
<dbReference type="Reactome" id="R-HSA-9013406">
    <property type="pathway name" value="RHOQ GTPase cycle"/>
</dbReference>
<dbReference type="Reactome" id="R-HSA-9013423">
    <property type="pathway name" value="RAC3 GTPase cycle"/>
</dbReference>
<dbReference type="SignaLink" id="Q68EM7"/>
<dbReference type="SIGNOR" id="Q68EM7"/>
<dbReference type="BioGRID-ORCS" id="55114">
    <property type="hits" value="13 hits in 1157 CRISPR screens"/>
</dbReference>
<dbReference type="ChiTaRS" id="ARHGAP17">
    <property type="organism name" value="human"/>
</dbReference>
<dbReference type="GenomeRNAi" id="55114"/>
<dbReference type="Pharos" id="Q68EM7">
    <property type="development level" value="Tbio"/>
</dbReference>
<dbReference type="PRO" id="PR:Q68EM7"/>
<dbReference type="Proteomes" id="UP000005640">
    <property type="component" value="Chromosome 16"/>
</dbReference>
<dbReference type="RNAct" id="Q68EM7">
    <property type="molecule type" value="protein"/>
</dbReference>
<dbReference type="Bgee" id="ENSG00000140750">
    <property type="expression patterns" value="Expressed in spleen and 96 other cell types or tissues"/>
</dbReference>
<dbReference type="ExpressionAtlas" id="Q68EM7">
    <property type="expression patterns" value="baseline and differential"/>
</dbReference>
<dbReference type="GO" id="GO:0005923">
    <property type="term" value="C:bicellular tight junction"/>
    <property type="evidence" value="ECO:0007669"/>
    <property type="project" value="UniProtKB-SubCell"/>
</dbReference>
<dbReference type="GO" id="GO:0005829">
    <property type="term" value="C:cytosol"/>
    <property type="evidence" value="ECO:0000314"/>
    <property type="project" value="HPA"/>
</dbReference>
<dbReference type="GO" id="GO:0005886">
    <property type="term" value="C:plasma membrane"/>
    <property type="evidence" value="ECO:0000314"/>
    <property type="project" value="HPA"/>
</dbReference>
<dbReference type="GO" id="GO:0005096">
    <property type="term" value="F:GTPase activator activity"/>
    <property type="evidence" value="ECO:0000318"/>
    <property type="project" value="GO_Central"/>
</dbReference>
<dbReference type="GO" id="GO:0017124">
    <property type="term" value="F:SH3 domain binding"/>
    <property type="evidence" value="ECO:0007669"/>
    <property type="project" value="UniProtKB-KW"/>
</dbReference>
<dbReference type="GO" id="GO:0051058">
    <property type="term" value="P:negative regulation of small GTPase mediated signal transduction"/>
    <property type="evidence" value="ECO:0000318"/>
    <property type="project" value="GO_Central"/>
</dbReference>
<dbReference type="GO" id="GO:0032956">
    <property type="term" value="P:regulation of actin cytoskeleton organization"/>
    <property type="evidence" value="ECO:0000318"/>
    <property type="project" value="GO_Central"/>
</dbReference>
<dbReference type="GO" id="GO:0035020">
    <property type="term" value="P:regulation of Rac protein signal transduction"/>
    <property type="evidence" value="ECO:0000318"/>
    <property type="project" value="GO_Central"/>
</dbReference>
<dbReference type="GO" id="GO:0007165">
    <property type="term" value="P:signal transduction"/>
    <property type="evidence" value="ECO:0007669"/>
    <property type="project" value="InterPro"/>
</dbReference>
<dbReference type="CDD" id="cd07618">
    <property type="entry name" value="BAR_Rich1"/>
    <property type="match status" value="1"/>
</dbReference>
<dbReference type="CDD" id="cd04386">
    <property type="entry name" value="RhoGAP_nadrin"/>
    <property type="match status" value="1"/>
</dbReference>
<dbReference type="FunFam" id="1.10.555.10:FF:000001">
    <property type="entry name" value="Rho GTPase activating protein 44"/>
    <property type="match status" value="1"/>
</dbReference>
<dbReference type="FunFam" id="1.20.1270.60:FF:000019">
    <property type="entry name" value="rho GTPase-activating protein 17 isoform X1"/>
    <property type="match status" value="1"/>
</dbReference>
<dbReference type="Gene3D" id="1.20.1270.60">
    <property type="entry name" value="Arfaptin homology (AH) domain/BAR domain"/>
    <property type="match status" value="1"/>
</dbReference>
<dbReference type="Gene3D" id="1.10.555.10">
    <property type="entry name" value="Rho GTPase activation protein"/>
    <property type="match status" value="1"/>
</dbReference>
<dbReference type="InterPro" id="IPR027267">
    <property type="entry name" value="AH/BAR_dom_sf"/>
</dbReference>
<dbReference type="InterPro" id="IPR004148">
    <property type="entry name" value="BAR_dom"/>
</dbReference>
<dbReference type="InterPro" id="IPR047165">
    <property type="entry name" value="RHG17/44/SH3BP1-like"/>
</dbReference>
<dbReference type="InterPro" id="IPR008936">
    <property type="entry name" value="Rho_GTPase_activation_prot"/>
</dbReference>
<dbReference type="InterPro" id="IPR000198">
    <property type="entry name" value="RhoGAP_dom"/>
</dbReference>
<dbReference type="PANTHER" id="PTHR14130">
    <property type="entry name" value="3BP-1 RELATED RHOGAP"/>
    <property type="match status" value="1"/>
</dbReference>
<dbReference type="PANTHER" id="PTHR14130:SF3">
    <property type="entry name" value="RHO GTPASE-ACTIVATING PROTEIN 17"/>
    <property type="match status" value="1"/>
</dbReference>
<dbReference type="Pfam" id="PF03114">
    <property type="entry name" value="BAR"/>
    <property type="match status" value="1"/>
</dbReference>
<dbReference type="Pfam" id="PF00620">
    <property type="entry name" value="RhoGAP"/>
    <property type="match status" value="1"/>
</dbReference>
<dbReference type="SMART" id="SM00721">
    <property type="entry name" value="BAR"/>
    <property type="match status" value="1"/>
</dbReference>
<dbReference type="SMART" id="SM00324">
    <property type="entry name" value="RhoGAP"/>
    <property type="match status" value="1"/>
</dbReference>
<dbReference type="SUPFAM" id="SSF103657">
    <property type="entry name" value="BAR/IMD domain-like"/>
    <property type="match status" value="1"/>
</dbReference>
<dbReference type="SUPFAM" id="SSF48350">
    <property type="entry name" value="GTPase activation domain, GAP"/>
    <property type="match status" value="1"/>
</dbReference>
<dbReference type="PROSITE" id="PS51021">
    <property type="entry name" value="BAR"/>
    <property type="match status" value="1"/>
</dbReference>
<dbReference type="PROSITE" id="PS50238">
    <property type="entry name" value="RHOGAP"/>
    <property type="match status" value="1"/>
</dbReference>
<reference key="1">
    <citation type="journal article" date="2001" name="J. Biol. Chem.">
        <title>Rich, a rho GTPase-activating protein domain-containing protein involved in signaling by Cdc42 and Rac1.</title>
        <authorList>
            <person name="Richnau N."/>
            <person name="Aspenstroem P."/>
        </authorList>
    </citation>
    <scope>NUCLEOTIDE SEQUENCE [MRNA] (ISOFORMS 2 AND 4)</scope>
    <scope>FUNCTION</scope>
    <scope>SUBCELLULAR LOCATION</scope>
    <scope>TISSUE SPECIFICITY</scope>
    <scope>INTERACTION WITH FNBP1 AND TRIP10</scope>
    <scope>MUTAGENESIS OF ARG-288</scope>
</reference>
<reference key="2">
    <citation type="journal article" date="2004" name="Nat. Genet.">
        <title>Complete sequencing and characterization of 21,243 full-length human cDNAs.</title>
        <authorList>
            <person name="Ota T."/>
            <person name="Suzuki Y."/>
            <person name="Nishikawa T."/>
            <person name="Otsuki T."/>
            <person name="Sugiyama T."/>
            <person name="Irie R."/>
            <person name="Wakamatsu A."/>
            <person name="Hayashi K."/>
            <person name="Sato H."/>
            <person name="Nagai K."/>
            <person name="Kimura K."/>
            <person name="Makita H."/>
            <person name="Sekine M."/>
            <person name="Obayashi M."/>
            <person name="Nishi T."/>
            <person name="Shibahara T."/>
            <person name="Tanaka T."/>
            <person name="Ishii S."/>
            <person name="Yamamoto J."/>
            <person name="Saito K."/>
            <person name="Kawai Y."/>
            <person name="Isono Y."/>
            <person name="Nakamura Y."/>
            <person name="Nagahari K."/>
            <person name="Murakami K."/>
            <person name="Yasuda T."/>
            <person name="Iwayanagi T."/>
            <person name="Wagatsuma M."/>
            <person name="Shiratori A."/>
            <person name="Sudo H."/>
            <person name="Hosoiri T."/>
            <person name="Kaku Y."/>
            <person name="Kodaira H."/>
            <person name="Kondo H."/>
            <person name="Sugawara M."/>
            <person name="Takahashi M."/>
            <person name="Kanda K."/>
            <person name="Yokoi T."/>
            <person name="Furuya T."/>
            <person name="Kikkawa E."/>
            <person name="Omura Y."/>
            <person name="Abe K."/>
            <person name="Kamihara K."/>
            <person name="Katsuta N."/>
            <person name="Sato K."/>
            <person name="Tanikawa M."/>
            <person name="Yamazaki M."/>
            <person name="Ninomiya K."/>
            <person name="Ishibashi T."/>
            <person name="Yamashita H."/>
            <person name="Murakawa K."/>
            <person name="Fujimori K."/>
            <person name="Tanai H."/>
            <person name="Kimata M."/>
            <person name="Watanabe M."/>
            <person name="Hiraoka S."/>
            <person name="Chiba Y."/>
            <person name="Ishida S."/>
            <person name="Ono Y."/>
            <person name="Takiguchi S."/>
            <person name="Watanabe S."/>
            <person name="Yosida M."/>
            <person name="Hotuta T."/>
            <person name="Kusano J."/>
            <person name="Kanehori K."/>
            <person name="Takahashi-Fujii A."/>
            <person name="Hara H."/>
            <person name="Tanase T.-O."/>
            <person name="Nomura Y."/>
            <person name="Togiya S."/>
            <person name="Komai F."/>
            <person name="Hara R."/>
            <person name="Takeuchi K."/>
            <person name="Arita M."/>
            <person name="Imose N."/>
            <person name="Musashino K."/>
            <person name="Yuuki H."/>
            <person name="Oshima A."/>
            <person name="Sasaki N."/>
            <person name="Aotsuka S."/>
            <person name="Yoshikawa Y."/>
            <person name="Matsunawa H."/>
            <person name="Ichihara T."/>
            <person name="Shiohata N."/>
            <person name="Sano S."/>
            <person name="Moriya S."/>
            <person name="Momiyama H."/>
            <person name="Satoh N."/>
            <person name="Takami S."/>
            <person name="Terashima Y."/>
            <person name="Suzuki O."/>
            <person name="Nakagawa S."/>
            <person name="Senoh A."/>
            <person name="Mizoguchi H."/>
            <person name="Goto Y."/>
            <person name="Shimizu F."/>
            <person name="Wakebe H."/>
            <person name="Hishigaki H."/>
            <person name="Watanabe T."/>
            <person name="Sugiyama A."/>
            <person name="Takemoto M."/>
            <person name="Kawakami B."/>
            <person name="Yamazaki M."/>
            <person name="Watanabe K."/>
            <person name="Kumagai A."/>
            <person name="Itakura S."/>
            <person name="Fukuzumi Y."/>
            <person name="Fujimori Y."/>
            <person name="Komiyama M."/>
            <person name="Tashiro H."/>
            <person name="Tanigami A."/>
            <person name="Fujiwara T."/>
            <person name="Ono T."/>
            <person name="Yamada K."/>
            <person name="Fujii Y."/>
            <person name="Ozaki K."/>
            <person name="Hirao M."/>
            <person name="Ohmori Y."/>
            <person name="Kawabata A."/>
            <person name="Hikiji T."/>
            <person name="Kobatake N."/>
            <person name="Inagaki H."/>
            <person name="Ikema Y."/>
            <person name="Okamoto S."/>
            <person name="Okitani R."/>
            <person name="Kawakami T."/>
            <person name="Noguchi S."/>
            <person name="Itoh T."/>
            <person name="Shigeta K."/>
            <person name="Senba T."/>
            <person name="Matsumura K."/>
            <person name="Nakajima Y."/>
            <person name="Mizuno T."/>
            <person name="Morinaga M."/>
            <person name="Sasaki M."/>
            <person name="Togashi T."/>
            <person name="Oyama M."/>
            <person name="Hata H."/>
            <person name="Watanabe M."/>
            <person name="Komatsu T."/>
            <person name="Mizushima-Sugano J."/>
            <person name="Satoh T."/>
            <person name="Shirai Y."/>
            <person name="Takahashi Y."/>
            <person name="Nakagawa K."/>
            <person name="Okumura K."/>
            <person name="Nagase T."/>
            <person name="Nomura N."/>
            <person name="Kikuchi H."/>
            <person name="Masuho Y."/>
            <person name="Yamashita R."/>
            <person name="Nakai K."/>
            <person name="Yada T."/>
            <person name="Nakamura Y."/>
            <person name="Ohara O."/>
            <person name="Isogai T."/>
            <person name="Sugano S."/>
        </authorList>
    </citation>
    <scope>NUCLEOTIDE SEQUENCE [LARGE SCALE MRNA] (ISOFORMS 1; 2 AND 3)</scope>
    <scope>NUCLEOTIDE SEQUENCE [LARGE SCALE MRNA] OF 634-881 (ISOFORM 5)</scope>
    <source>
        <tissue>Placenta</tissue>
        <tissue>Teratocarcinoma</tissue>
    </source>
</reference>
<reference key="3">
    <citation type="journal article" date="2007" name="BMC Genomics">
        <title>The full-ORF clone resource of the German cDNA consortium.</title>
        <authorList>
            <person name="Bechtel S."/>
            <person name="Rosenfelder H."/>
            <person name="Duda A."/>
            <person name="Schmidt C.P."/>
            <person name="Ernst U."/>
            <person name="Wellenreuther R."/>
            <person name="Mehrle A."/>
            <person name="Schuster C."/>
            <person name="Bahr A."/>
            <person name="Bloecker H."/>
            <person name="Heubner D."/>
            <person name="Hoerlein A."/>
            <person name="Michel G."/>
            <person name="Wedler H."/>
            <person name="Koehrer K."/>
            <person name="Ottenwaelder B."/>
            <person name="Poustka A."/>
            <person name="Wiemann S."/>
            <person name="Schupp I."/>
        </authorList>
    </citation>
    <scope>NUCLEOTIDE SEQUENCE [LARGE SCALE MRNA] (ISOFORM 7)</scope>
    <source>
        <tissue>Brain</tissue>
    </source>
</reference>
<reference key="4">
    <citation type="journal article" date="2004" name="Genome Res.">
        <title>The status, quality, and expansion of the NIH full-length cDNA project: the Mammalian Gene Collection (MGC).</title>
        <authorList>
            <consortium name="The MGC Project Team"/>
        </authorList>
    </citation>
    <scope>NUCLEOTIDE SEQUENCE [LARGE SCALE MRNA] (ISOFORM 1)</scope>
    <scope>NUCLEOTIDE SEQUENCE [LARGE SCALE MRNA] OF 714-881 (ISOFORM 6)</scope>
    <source>
        <tissue>Cervix</tissue>
        <tissue>Eye</tissue>
    </source>
</reference>
<reference key="5">
    <citation type="submission" date="1999-06" db="EMBL/GenBank/DDBJ databases">
        <authorList>
            <person name="Liu Y.Q."/>
            <person name="Zhao B."/>
            <person name="Xu Y.Y."/>
            <person name="Wang X.Y."/>
            <person name="Liu B."/>
            <person name="Ye J."/>
            <person name="Song L."/>
            <person name="Gao Y."/>
            <person name="Zhang C.L."/>
            <person name="Zhang J."/>
            <person name="Gao R.L."/>
            <person name="Wu Q.Y."/>
            <person name="Hui R.T."/>
        </authorList>
    </citation>
    <scope>NUCLEOTIDE SEQUENCE [LARGE SCALE MRNA] OF 708-881</scope>
    <source>
        <tissue>Aorta</tissue>
    </source>
</reference>
<reference key="6">
    <citation type="journal article" date="2001" name="J. Cell Biol.">
        <title>Identification of EPI64, a TBC/rabGAP domain-containing microvillar protein that binds to the first PDZ domain of EBP50 and E3KARP.</title>
        <authorList>
            <person name="Reczek D."/>
            <person name="Bretscher A."/>
        </authorList>
    </citation>
    <scope>INTERACTION WITH NHERF1</scope>
</reference>
<reference key="7">
    <citation type="journal article" date="2006" name="Cell">
        <title>A Rich1/Amot complex regulates the Cdc42 GTPase and apical-polarity proteins in epithelial cells.</title>
        <authorList>
            <person name="Wells C.D."/>
            <person name="Fawcett J.P."/>
            <person name="Traweger A."/>
            <person name="Yamanaka Y."/>
            <person name="Goudreault M."/>
            <person name="Elder K."/>
            <person name="Kulkarni S."/>
            <person name="Gish G."/>
            <person name="Virag C."/>
            <person name="Lim C."/>
            <person name="Colwill K."/>
            <person name="Starostine A."/>
            <person name="Metalnikov P."/>
            <person name="Pawson T."/>
        </authorList>
    </citation>
    <scope>FUNCTION</scope>
    <scope>SUBCELLULAR LOCATION</scope>
    <scope>DOMAIN BAR</scope>
    <scope>INTERACTION WITH AMOT; PALS1; PATJ; PARD3; CAPZA; CAPZB; CD2AP AND SH3KBP1</scope>
</reference>
<reference key="8">
    <citation type="journal article" date="2008" name="Proc. Natl. Acad. Sci. U.S.A.">
        <title>A quantitative atlas of mitotic phosphorylation.</title>
        <authorList>
            <person name="Dephoure N."/>
            <person name="Zhou C."/>
            <person name="Villen J."/>
            <person name="Beausoleil S.A."/>
            <person name="Bakalarski C.E."/>
            <person name="Elledge S.J."/>
            <person name="Gygi S.P."/>
        </authorList>
    </citation>
    <scope>PHOSPHORYLATION [LARGE SCALE ANALYSIS] AT SER-575</scope>
    <scope>IDENTIFICATION BY MASS SPECTROMETRY [LARGE SCALE ANALYSIS]</scope>
    <source>
        <tissue>Cervix carcinoma</tissue>
    </source>
</reference>
<reference key="9">
    <citation type="journal article" date="2009" name="Sci. Signal.">
        <title>Quantitative phosphoproteomic analysis of T cell receptor signaling reveals system-wide modulation of protein-protein interactions.</title>
        <authorList>
            <person name="Mayya V."/>
            <person name="Lundgren D.H."/>
            <person name="Hwang S.-I."/>
            <person name="Rezaul K."/>
            <person name="Wu L."/>
            <person name="Eng J.K."/>
            <person name="Rodionov V."/>
            <person name="Han D.K."/>
        </authorList>
    </citation>
    <scope>PHOSPHORYLATION [LARGE SCALE ANALYSIS] AT THR-679</scope>
    <scope>IDENTIFICATION BY MASS SPECTROMETRY [LARGE SCALE ANALYSIS]</scope>
    <source>
        <tissue>Leukemic T-cell</tissue>
    </source>
</reference>
<reference key="10">
    <citation type="journal article" date="2010" name="Sci. Signal.">
        <title>Quantitative phosphoproteomics reveals widespread full phosphorylation site occupancy during mitosis.</title>
        <authorList>
            <person name="Olsen J.V."/>
            <person name="Vermeulen M."/>
            <person name="Santamaria A."/>
            <person name="Kumar C."/>
            <person name="Miller M.L."/>
            <person name="Jensen L.J."/>
            <person name="Gnad F."/>
            <person name="Cox J."/>
            <person name="Jensen T.S."/>
            <person name="Nigg E.A."/>
            <person name="Brunak S."/>
            <person name="Mann M."/>
        </authorList>
    </citation>
    <scope>IDENTIFICATION BY MASS SPECTROMETRY [LARGE SCALE ANALYSIS]</scope>
    <source>
        <tissue>Cervix carcinoma</tissue>
    </source>
</reference>
<reference key="11">
    <citation type="journal article" date="2011" name="BMC Syst. Biol.">
        <title>Initial characterization of the human central proteome.</title>
        <authorList>
            <person name="Burkard T.R."/>
            <person name="Planyavsky M."/>
            <person name="Kaupe I."/>
            <person name="Breitwieser F.P."/>
            <person name="Buerckstuemmer T."/>
            <person name="Bennett K.L."/>
            <person name="Superti-Furga G."/>
            <person name="Colinge J."/>
        </authorList>
    </citation>
    <scope>IDENTIFICATION BY MASS SPECTROMETRY [LARGE SCALE ANALYSIS]</scope>
</reference>
<reference key="12">
    <citation type="journal article" date="2011" name="Sci. Signal.">
        <title>System-wide temporal characterization of the proteome and phosphoproteome of human embryonic stem cell differentiation.</title>
        <authorList>
            <person name="Rigbolt K.T."/>
            <person name="Prokhorova T.A."/>
            <person name="Akimov V."/>
            <person name="Henningsen J."/>
            <person name="Johansen P.T."/>
            <person name="Kratchmarova I."/>
            <person name="Kassem M."/>
            <person name="Mann M."/>
            <person name="Olsen J.V."/>
            <person name="Blagoev B."/>
        </authorList>
    </citation>
    <scope>PHOSPHORYLATION [LARGE SCALE ANALYSIS] AT SER-575</scope>
    <scope>IDENTIFICATION BY MASS SPECTROMETRY [LARGE SCALE ANALYSIS]</scope>
</reference>
<reference key="13">
    <citation type="journal article" date="2012" name="Proc. Natl. Acad. Sci. U.S.A.">
        <title>N-terminal acetylome analyses and functional insights of the N-terminal acetyltransferase NatB.</title>
        <authorList>
            <person name="Van Damme P."/>
            <person name="Lasa M."/>
            <person name="Polevoda B."/>
            <person name="Gazquez C."/>
            <person name="Elosegui-Artola A."/>
            <person name="Kim D.S."/>
            <person name="De Juan-Pardo E."/>
            <person name="Demeyer K."/>
            <person name="Hole K."/>
            <person name="Larrea E."/>
            <person name="Timmerman E."/>
            <person name="Prieto J."/>
            <person name="Arnesen T."/>
            <person name="Sherman F."/>
            <person name="Gevaert K."/>
            <person name="Aldabe R."/>
        </authorList>
    </citation>
    <scope>IDENTIFICATION BY MASS SPECTROMETRY [LARGE SCALE ANALYSIS]</scope>
</reference>
<reference key="14">
    <citation type="journal article" date="2013" name="J. Proteome Res.">
        <title>Toward a comprehensive characterization of a human cancer cell phosphoproteome.</title>
        <authorList>
            <person name="Zhou H."/>
            <person name="Di Palma S."/>
            <person name="Preisinger C."/>
            <person name="Peng M."/>
            <person name="Polat A.N."/>
            <person name="Heck A.J."/>
            <person name="Mohammed S."/>
        </authorList>
    </citation>
    <scope>PHOSPHORYLATION [LARGE SCALE ANALYSIS] AT SER-484 AND SER-575</scope>
    <scope>IDENTIFICATION BY MASS SPECTROMETRY [LARGE SCALE ANALYSIS]</scope>
    <source>
        <tissue>Cervix carcinoma</tissue>
        <tissue>Erythroleukemia</tissue>
    </source>
</reference>
<reference key="15">
    <citation type="journal article" date="2014" name="J. Proteomics">
        <title>An enzyme assisted RP-RPLC approach for in-depth analysis of human liver phosphoproteome.</title>
        <authorList>
            <person name="Bian Y."/>
            <person name="Song C."/>
            <person name="Cheng K."/>
            <person name="Dong M."/>
            <person name="Wang F."/>
            <person name="Huang J."/>
            <person name="Sun D."/>
            <person name="Wang L."/>
            <person name="Ye M."/>
            <person name="Zou H."/>
        </authorList>
    </citation>
    <scope>PHOSPHORYLATION [LARGE SCALE ANALYSIS] AT SER-575 AND THR-682</scope>
    <scope>IDENTIFICATION BY MASS SPECTROMETRY [LARGE SCALE ANALYSIS]</scope>
    <source>
        <tissue>Liver</tissue>
    </source>
</reference>
<reference key="16">
    <citation type="journal article" date="2015" name="Proteomics">
        <title>N-terminome analysis of the human mitochondrial proteome.</title>
        <authorList>
            <person name="Vaca Jacome A.S."/>
            <person name="Rabilloud T."/>
            <person name="Schaeffer-Reiss C."/>
            <person name="Rompais M."/>
            <person name="Ayoub D."/>
            <person name="Lane L."/>
            <person name="Bairoch A."/>
            <person name="Van Dorsselaer A."/>
            <person name="Carapito C."/>
        </authorList>
    </citation>
    <scope>IDENTIFICATION BY MASS SPECTROMETRY [LARGE SCALE ANALYSIS]</scope>
</reference>
<sequence length="881" mass="95437">MKKQFNRMKQLANQTVGRAEKTEVLSEDLLQIERRLDTVRSICHHSHKRLVACFQGQHGTDAERRHKKLPLTALAQNMQEASTQLEDSLLGKMLETCGDAENQLALELSQHEVFVEKEIVDPLYGIAEVEIPNIQKQRKQLARLVLDWDSVRARWNQAHKSSGTNFQGLPSKIDTLKEEMDEAGNKVEQCKDQLAADMYNFMAKEGEYGKFFVTLLEAQADYHRKALAVLEKTLPEMRAHQDKWAEKPAFGTPLEEHLKRSGREIALPIEACVMLLLETGMKEEGLFRIGAGASKLKKLKAALDCSTSHLDEFYSDPHAVAGALKSYLRELPEPLMTFNLYEEWTQVASVQDQDKKLQDLWRTCQKLPPQNFVNFRYLIKFLAKLAQTSDVNKMTPSNIAIVLGPNLLWARNEGTLAEMAAATSVHVVAVIEPIIQHADWFFPEEVEFNVSEAFVPLTTPSSNHSFHTGNDSDSGTLERKRPASMAVMEGDLVKKESFGVKLMDFQAHRRGGTLNRKHISPAFQPPLPPTDGSTVVPAGPEPPPQSSRAESSSGGGTVPSSAGILEQGPSPGDGSPPKPKDPVSAAVPAPGRNNSQIASGQNQPQAAAGSHQLSMGQPHNAAGPSPHTLRRAVKKPAPAPPKPGNPPPGHPGGQSSSGTSQHPPSLSPKPPTRSPSPPTQHTGQPPGQPSAPSQLSAPRRYSSSLSPIQAPNHPPPQPPTQATPLMHTKPNSQGPPNPMALPSEHGLEQPSHTPPQTPTPPSTPPLGKQNPSLPAPQTLAGGNPETAQPHAGTLPRPRPVPKPRNRPSVPPPPQPPGVHSAGDSSLTNTAPTASKIVTDSNSRVSEPHRSIFPEMHSDSASKDVPGRILLDIDNDTESTAL</sequence>
<keyword id="KW-0025">Alternative splicing</keyword>
<keyword id="KW-0965">Cell junction</keyword>
<keyword id="KW-0963">Cytoplasm</keyword>
<keyword id="KW-0343">GTPase activation</keyword>
<keyword id="KW-0472">Membrane</keyword>
<keyword id="KW-0597">Phosphoprotein</keyword>
<keyword id="KW-1267">Proteomics identification</keyword>
<keyword id="KW-1185">Reference proteome</keyword>
<keyword id="KW-0729">SH3-binding</keyword>
<keyword id="KW-0796">Tight junction</keyword>
<feature type="chain" id="PRO_0000280462" description="Rho GTPase-activating protein 17">
    <location>
        <begin position="1"/>
        <end position="881"/>
    </location>
</feature>
<feature type="domain" description="BAR" evidence="4">
    <location>
        <begin position="14"/>
        <end position="246"/>
    </location>
</feature>
<feature type="domain" description="Rho-GAP" evidence="3">
    <location>
        <begin position="252"/>
        <end position="442"/>
    </location>
</feature>
<feature type="region of interest" description="Disordered" evidence="5">
    <location>
        <begin position="459"/>
        <end position="482"/>
    </location>
</feature>
<feature type="region of interest" description="Disordered" evidence="5">
    <location>
        <begin position="511"/>
        <end position="881"/>
    </location>
</feature>
<feature type="short sequence motif" description="SH3-binding" evidence="2">
    <location>
        <begin position="753"/>
        <end position="766"/>
    </location>
</feature>
<feature type="compositionally biased region" description="Polar residues" evidence="5">
    <location>
        <begin position="459"/>
        <end position="475"/>
    </location>
</feature>
<feature type="compositionally biased region" description="Polar residues" evidence="5">
    <location>
        <begin position="592"/>
        <end position="617"/>
    </location>
</feature>
<feature type="compositionally biased region" description="Pro residues" evidence="5">
    <location>
        <begin position="637"/>
        <end position="650"/>
    </location>
</feature>
<feature type="compositionally biased region" description="Low complexity" evidence="5">
    <location>
        <begin position="653"/>
        <end position="664"/>
    </location>
</feature>
<feature type="compositionally biased region" description="Pro residues" evidence="5">
    <location>
        <begin position="665"/>
        <end position="678"/>
    </location>
</feature>
<feature type="compositionally biased region" description="Low complexity" evidence="5">
    <location>
        <begin position="679"/>
        <end position="698"/>
    </location>
</feature>
<feature type="compositionally biased region" description="Pro residues" evidence="5">
    <location>
        <begin position="712"/>
        <end position="721"/>
    </location>
</feature>
<feature type="compositionally biased region" description="Pro residues" evidence="5">
    <location>
        <begin position="752"/>
        <end position="764"/>
    </location>
</feature>
<feature type="compositionally biased region" description="Pro residues" evidence="5">
    <location>
        <begin position="806"/>
        <end position="816"/>
    </location>
</feature>
<feature type="compositionally biased region" description="Polar residues" evidence="5">
    <location>
        <begin position="822"/>
        <end position="844"/>
    </location>
</feature>
<feature type="compositionally biased region" description="Basic and acidic residues" evidence="5">
    <location>
        <begin position="845"/>
        <end position="865"/>
    </location>
</feature>
<feature type="compositionally biased region" description="Acidic residues" evidence="5">
    <location>
        <begin position="872"/>
        <end position="881"/>
    </location>
</feature>
<feature type="site" description="Arginine finger; crucial for GTP hydrolysis by stabilizing the transition state" evidence="3">
    <location>
        <position position="288"/>
    </location>
</feature>
<feature type="modified residue" description="Phosphoserine" evidence="17">
    <location>
        <position position="484"/>
    </location>
</feature>
<feature type="modified residue" description="Phosphoserine" evidence="14 16 17 18">
    <location>
        <position position="575"/>
    </location>
</feature>
<feature type="modified residue" description="Phosphothreonine" evidence="15">
    <location>
        <position position="679"/>
    </location>
</feature>
<feature type="modified residue" description="Phosphothreonine" evidence="18">
    <location>
        <position position="682"/>
    </location>
</feature>
<feature type="modified residue" description="Phosphoserine" evidence="1">
    <location>
        <position position="702"/>
    </location>
</feature>
<feature type="modified residue" description="Phosphoserine" evidence="1">
    <location>
        <position position="704"/>
    </location>
</feature>
<feature type="modified residue" description="Phosphothreonine" evidence="1">
    <location>
        <position position="753"/>
    </location>
</feature>
<feature type="modified residue" description="Phosphothreonine" evidence="1">
    <location>
        <position position="757"/>
    </location>
</feature>
<feature type="modified residue" description="Phosphothreonine" evidence="1">
    <location>
        <position position="759"/>
    </location>
</feature>
<feature type="modified residue" description="Phosphoserine" evidence="1">
    <location>
        <position position="762"/>
    </location>
</feature>
<feature type="modified residue" description="Phosphothreonine" evidence="1">
    <location>
        <position position="763"/>
    </location>
</feature>
<feature type="splice variant" id="VSP_023682" description="In isoform 7." evidence="12">
    <location>
        <begin position="1"/>
        <end position="467"/>
    </location>
</feature>
<feature type="splice variant" id="VSP_023683" description="In isoform 3." evidence="10">
    <location>
        <begin position="1"/>
        <end position="273"/>
    </location>
</feature>
<feature type="splice variant" id="VSP_023684" description="In isoform 4." evidence="9">
    <original>LLEAQADYHRKA</original>
    <variation>ISGRKNQPLGLP</variation>
    <location>
        <begin position="215"/>
        <end position="226"/>
    </location>
</feature>
<feature type="splice variant" id="VSP_023685" description="In isoform 4." evidence="9">
    <location>
        <begin position="227"/>
        <end position="881"/>
    </location>
</feature>
<feature type="splice variant" id="VSP_023686" description="In isoform 7." evidence="12">
    <original>TGNDSDSGTLERKRPASMAVMEGDLVKKE</original>
    <variation>MCGFNTCGPMGFCLSSLLAWCVDCFFSLC</variation>
    <location>
        <begin position="468"/>
        <end position="496"/>
    </location>
</feature>
<feature type="splice variant" id="VSP_023687" description="In isoform 2." evidence="9 10">
    <location>
        <begin position="497"/>
        <end position="574"/>
    </location>
</feature>
<feature type="splice variant" id="VSP_023688" description="In isoform 5." evidence="10">
    <original>DSNSRVSEPHRSIFPEMHSDSASKDVPGRILLDIDNDTESTAL</original>
    <variation>GFQNRIAASFLKCTQTQPAKTCLAASCWI</variation>
    <location>
        <begin position="839"/>
        <end position="881"/>
    </location>
</feature>
<feature type="splice variant" id="VSP_023689" description="In isoform 6." evidence="11">
    <original>SNSRVSEPHRSIFPEMHSDSASKDVPGRILLDIDNDTESTAL</original>
    <variation>V</variation>
    <location>
        <begin position="840"/>
        <end position="881"/>
    </location>
</feature>
<feature type="mutagenesis site" description="Loss of function; leading to defects in tight junction maintenance." evidence="7">
    <original>R</original>
    <variation>A</variation>
    <location>
        <position position="288"/>
    </location>
</feature>
<feature type="sequence conflict" description="In Ref. 2; BAB55203." evidence="13" ref="2">
    <original>K</original>
    <variation>E</variation>
    <location>
        <position position="139"/>
    </location>
</feature>
<feature type="sequence conflict" description="In Ref. 1; CAC37948." evidence="13" ref="1">
    <original>Q</original>
    <variation>R</variation>
    <location>
        <position position="167"/>
    </location>
</feature>
<feature type="sequence conflict" description="In Ref. 1; CAC37948." evidence="13" ref="1">
    <original>K</original>
    <variation>R</variation>
    <location>
        <position position="186"/>
    </location>
</feature>
<feature type="sequence conflict" description="In Ref. 2; BAB14506." evidence="13" ref="2">
    <original>E</original>
    <variation>A</variation>
    <location>
        <position position="255"/>
    </location>
</feature>
<feature type="sequence conflict" description="In Ref. 2; BAB55203." evidence="13" ref="2">
    <original>G</original>
    <variation>A</variation>
    <location>
        <position position="404"/>
    </location>
</feature>
<feature type="sequence conflict" description="In Ref. 2; BAC86144." evidence="13" ref="2">
    <original>S</original>
    <variation>C</variation>
    <location>
        <position position="575"/>
    </location>
</feature>
<feature type="sequence conflict" description="In Ref. 2; BAB55203." evidence="13" ref="2">
    <original>M</original>
    <variation>V</variation>
    <location>
        <position position="855"/>
    </location>
</feature>
<name>RHG17_HUMAN</name>
<comment type="function">
    <text evidence="7 8">Rho GTPase-activating protein involved in the maintenance of tight junction by regulating the activity of CDC42, thereby playing a central role in apical polarity of epithelial cells. Specifically acts as a GTPase activator for the CDC42 GTPase by converting it to an inactive GDP-bound state. The complex formed with AMOT acts by regulating the uptake of polarity proteins at tight junctions, possibly by deciding whether tight junction transmembrane proteins are recycled back to the plasma membrane or sent elsewhere. Participates in the Ca(2+)-dependent regulation of exocytosis, possibly by catalyzing GTPase activity of Rho family proteins and by inducing the reorganization of the cortical actin filaments. Acts as a GTPase activator in vitro for RAC1.</text>
</comment>
<comment type="subunit">
    <text evidence="6 7 8">Component of a complex whose core is composed of ARHGAP17, AMOT, PALS1, PATJ and PARD3/PAR3. Interacts with NHERF1, FNBP1, TRIP10, CAPZA (CAPZA1, CAPZA2 or CAPZA3), CAPZB, CD2AP and SH3KBP1/CIN85.</text>
</comment>
<comment type="interaction">
    <interactant intactId="EBI-1642807">
        <id>Q68EM7</id>
    </interactant>
    <interactant intactId="EBI-2511319">
        <id>Q4VCS5</id>
        <label>AMOT</label>
    </interactant>
    <organismsDiffer>false</organismsDiffer>
    <experiments>2</experiments>
</comment>
<comment type="interaction">
    <interactant intactId="EBI-1642807">
        <id>Q68EM7</id>
    </interactant>
    <interactant intactId="EBI-3891843">
        <id>Q4VCS5-2</id>
        <label>AMOT</label>
    </interactant>
    <organismsDiffer>false</organismsDiffer>
    <experiments>4</experiments>
</comment>
<comment type="interaction">
    <interactant intactId="EBI-1642807">
        <id>Q68EM7</id>
    </interactant>
    <interactant intactId="EBI-20892940">
        <id>Q8IV35</id>
        <label>CFAP337</label>
    </interactant>
    <organismsDiffer>false</organismsDiffer>
    <experiments>2</experiments>
</comment>
<comment type="interaction">
    <interactant intactId="EBI-1642807">
        <id>Q68EM7</id>
    </interactant>
    <interactant intactId="EBI-346869">
        <id>Q9Y3L3</id>
        <label>SH3BP1</label>
    </interactant>
    <organismsDiffer>false</organismsDiffer>
    <experiments>4</experiments>
</comment>
<comment type="interaction">
    <interactant intactId="EBI-1642807">
        <id>Q68EM7</id>
    </interactant>
    <interactant intactId="EBI-739936">
        <id>Q15642</id>
        <label>TRIP10</label>
    </interactant>
    <organismsDiffer>false</organismsDiffer>
    <experiments>3</experiments>
</comment>
<comment type="interaction">
    <interactant intactId="EBI-1642807">
        <id>Q68EM7</id>
    </interactant>
    <interactant intactId="EBI-6550597">
        <id>Q15642-2</id>
        <label>TRIP10</label>
    </interactant>
    <organismsDiffer>false</organismsDiffer>
    <experiments>3</experiments>
</comment>
<comment type="subcellular location">
    <subcellularLocation>
        <location>Membrane</location>
        <topology>Peripheral membrane protein</topology>
    </subcellularLocation>
    <subcellularLocation>
        <location>Cytoplasm</location>
    </subcellularLocation>
    <subcellularLocation>
        <location>Cell junction</location>
        <location>Tight junction</location>
    </subcellularLocation>
    <text>Associates with membranes and concentrates at sites of cell-cell contact.</text>
</comment>
<comment type="alternative products">
    <event type="alternative splicing"/>
    <isoform>
        <id>Q68EM7-1</id>
        <name>1</name>
        <sequence type="displayed"/>
    </isoform>
    <isoform>
        <id>Q68EM7-2</id>
        <name>2</name>
        <sequence type="described" ref="VSP_023687"/>
    </isoform>
    <isoform>
        <id>Q68EM7-3</id>
        <name>3</name>
        <sequence type="described" ref="VSP_023683"/>
    </isoform>
    <isoform>
        <id>Q68EM7-4</id>
        <name>4</name>
        <name>RICH1B</name>
        <sequence type="described" ref="VSP_023684 VSP_023685"/>
    </isoform>
    <isoform>
        <id>Q68EM7-5</id>
        <name>5</name>
        <sequence type="described" ref="VSP_023688"/>
    </isoform>
    <isoform>
        <id>Q68EM7-6</id>
        <name>6</name>
        <sequence type="described" ref="VSP_023689"/>
    </isoform>
    <isoform>
        <id>Q68EM7-7</id>
        <name>7</name>
        <sequence type="described" ref="VSP_023682 VSP_023686"/>
    </isoform>
</comment>
<comment type="tissue specificity">
    <text evidence="7">Ubiquitously expressed. Expressed at higher level in heart and placenta.</text>
</comment>
<comment type="domain">
    <text evidence="8">The BAR domain mediates the interaction with the coiled coil domain of AMOT, leading to its recruitment to tight junctions.</text>
</comment>
<comment type="sequence caution" evidence="13">
    <conflict type="erroneous initiation">
        <sequence resource="EMBL-CDS" id="AAH01241"/>
    </conflict>
</comment>
<comment type="sequence caution" evidence="13">
    <conflict type="erroneous initiation">
        <sequence resource="EMBL-CDS" id="AAQ13586"/>
    </conflict>
</comment>
<comment type="sequence caution" evidence="13">
    <conflict type="erroneous initiation">
        <sequence resource="EMBL-CDS" id="AAQ13632"/>
    </conflict>
</comment>
<accession>Q68EM7</accession>
<accession>A8K6M6</accession>
<accession>Q6ZUS4</accession>
<accession>Q7Z2F2</accession>
<accession>Q8NDG2</accession>
<accession>Q96KS2</accession>
<accession>Q96KS3</accession>
<accession>Q96SS8</accession>
<accession>Q9BVF6</accession>
<accession>Q9H8U5</accession>
<accession>Q9NW54</accession>
<organism>
    <name type="scientific">Homo sapiens</name>
    <name type="common">Human</name>
    <dbReference type="NCBI Taxonomy" id="9606"/>
    <lineage>
        <taxon>Eukaryota</taxon>
        <taxon>Metazoa</taxon>
        <taxon>Chordata</taxon>
        <taxon>Craniata</taxon>
        <taxon>Vertebrata</taxon>
        <taxon>Euteleostomi</taxon>
        <taxon>Mammalia</taxon>
        <taxon>Eutheria</taxon>
        <taxon>Euarchontoglires</taxon>
        <taxon>Primates</taxon>
        <taxon>Haplorrhini</taxon>
        <taxon>Catarrhini</taxon>
        <taxon>Hominidae</taxon>
        <taxon>Homo</taxon>
    </lineage>
</organism>
<gene>
    <name type="primary">ARHGAP17</name>
    <name type="synonym">RICH1</name>
    <name type="ORF">MSTP066</name>
    <name type="ORF">MSTP110</name>
</gene>
<protein>
    <recommendedName>
        <fullName>Rho GTPase-activating protein 17</fullName>
    </recommendedName>
    <alternativeName>
        <fullName>Rho-type GTPase-activating protein 17</fullName>
    </alternativeName>
    <alternativeName>
        <fullName>RhoGAP interacting with CIP4 homologs protein 1</fullName>
        <shortName>RICH-1</shortName>
    </alternativeName>
</protein>
<evidence type="ECO:0000250" key="1">
    <source>
        <dbReference type="UniProtKB" id="Q3UIA2"/>
    </source>
</evidence>
<evidence type="ECO:0000255" key="2"/>
<evidence type="ECO:0000255" key="3">
    <source>
        <dbReference type="PROSITE-ProRule" id="PRU00172"/>
    </source>
</evidence>
<evidence type="ECO:0000255" key="4">
    <source>
        <dbReference type="PROSITE-ProRule" id="PRU00361"/>
    </source>
</evidence>
<evidence type="ECO:0000256" key="5">
    <source>
        <dbReference type="SAM" id="MobiDB-lite"/>
    </source>
</evidence>
<evidence type="ECO:0000269" key="6">
    <source>
    </source>
</evidence>
<evidence type="ECO:0000269" key="7">
    <source>
    </source>
</evidence>
<evidence type="ECO:0000269" key="8">
    <source>
    </source>
</evidence>
<evidence type="ECO:0000303" key="9">
    <source>
    </source>
</evidence>
<evidence type="ECO:0000303" key="10">
    <source>
    </source>
</evidence>
<evidence type="ECO:0000303" key="11">
    <source>
    </source>
</evidence>
<evidence type="ECO:0000303" key="12">
    <source>
    </source>
</evidence>
<evidence type="ECO:0000305" key="13"/>
<evidence type="ECO:0007744" key="14">
    <source>
    </source>
</evidence>
<evidence type="ECO:0007744" key="15">
    <source>
    </source>
</evidence>
<evidence type="ECO:0007744" key="16">
    <source>
    </source>
</evidence>
<evidence type="ECO:0007744" key="17">
    <source>
    </source>
</evidence>
<evidence type="ECO:0007744" key="18">
    <source>
    </source>
</evidence>